<accession>B1IUA1</accession>
<organism>
    <name type="scientific">Escherichia coli (strain ATCC 8739 / DSM 1576 / NBRC 3972 / NCIMB 8545 / WDCM 00012 / Crooks)</name>
    <dbReference type="NCBI Taxonomy" id="481805"/>
    <lineage>
        <taxon>Bacteria</taxon>
        <taxon>Pseudomonadati</taxon>
        <taxon>Pseudomonadota</taxon>
        <taxon>Gammaproteobacteria</taxon>
        <taxon>Enterobacterales</taxon>
        <taxon>Enterobacteriaceae</taxon>
        <taxon>Escherichia</taxon>
    </lineage>
</organism>
<gene>
    <name evidence="1" type="primary">nhaP2</name>
    <name type="synonym">cvrA</name>
    <name type="ordered locus">EcolC_2434</name>
</gene>
<proteinExistence type="inferred from homology"/>
<keyword id="KW-0050">Antiport</keyword>
<keyword id="KW-0997">Cell inner membrane</keyword>
<keyword id="KW-1003">Cell membrane</keyword>
<keyword id="KW-0406">Ion transport</keyword>
<keyword id="KW-0472">Membrane</keyword>
<keyword id="KW-0630">Potassium</keyword>
<keyword id="KW-0633">Potassium transport</keyword>
<keyword id="KW-0812">Transmembrane</keyword>
<keyword id="KW-1133">Transmembrane helix</keyword>
<keyword id="KW-0813">Transport</keyword>
<comment type="function">
    <text evidence="1">K(+)/H(+) antiporter that extrudes potassium in exchange for external protons and maintains the internal concentration of potassium under toxic levels.</text>
</comment>
<comment type="catalytic activity">
    <reaction evidence="1">
        <text>K(+)(in) + H(+)(out) = K(+)(out) + H(+)(in)</text>
        <dbReference type="Rhea" id="RHEA:29467"/>
        <dbReference type="ChEBI" id="CHEBI:15378"/>
        <dbReference type="ChEBI" id="CHEBI:29103"/>
    </reaction>
    <physiologicalReaction direction="left-to-right" evidence="1">
        <dbReference type="Rhea" id="RHEA:29468"/>
    </physiologicalReaction>
</comment>
<comment type="subcellular location">
    <subcellularLocation>
        <location evidence="1">Cell inner membrane</location>
        <topology evidence="1">Multi-pass membrane protein</topology>
    </subcellularLocation>
</comment>
<comment type="similarity">
    <text evidence="1">Belongs to the monovalent cation:proton antiporter 1 (CPA1) transporter (TC 2.A.36) family. NhaP2 subfamily.</text>
</comment>
<name>NHAP2_ECOLC</name>
<evidence type="ECO:0000255" key="1">
    <source>
        <dbReference type="HAMAP-Rule" id="MF_01075"/>
    </source>
</evidence>
<reference key="1">
    <citation type="submission" date="2008-02" db="EMBL/GenBank/DDBJ databases">
        <title>Complete sequence of Escherichia coli C str. ATCC 8739.</title>
        <authorList>
            <person name="Copeland A."/>
            <person name="Lucas S."/>
            <person name="Lapidus A."/>
            <person name="Glavina del Rio T."/>
            <person name="Dalin E."/>
            <person name="Tice H."/>
            <person name="Bruce D."/>
            <person name="Goodwin L."/>
            <person name="Pitluck S."/>
            <person name="Kiss H."/>
            <person name="Brettin T."/>
            <person name="Detter J.C."/>
            <person name="Han C."/>
            <person name="Kuske C.R."/>
            <person name="Schmutz J."/>
            <person name="Larimer F."/>
            <person name="Land M."/>
            <person name="Hauser L."/>
            <person name="Kyrpides N."/>
            <person name="Mikhailova N."/>
            <person name="Ingram L."/>
            <person name="Richardson P."/>
        </authorList>
    </citation>
    <scope>NUCLEOTIDE SEQUENCE [LARGE SCALE GENOMIC DNA]</scope>
    <source>
        <strain>ATCC 8739 / DSM 1576 / NBRC 3972 / NCIMB 8545 / WDCM 00012 / Crooks</strain>
    </source>
</reference>
<dbReference type="EMBL" id="CP000946">
    <property type="protein sequence ID" value="ACA78068.1"/>
    <property type="molecule type" value="Genomic_DNA"/>
</dbReference>
<dbReference type="RefSeq" id="WP_000340194.1">
    <property type="nucleotide sequence ID" value="NZ_MTFT01000016.1"/>
</dbReference>
<dbReference type="SMR" id="B1IUA1"/>
<dbReference type="KEGG" id="ecl:EcolC_2434"/>
<dbReference type="HOGENOM" id="CLU_005912_9_2_6"/>
<dbReference type="GO" id="GO:0005886">
    <property type="term" value="C:plasma membrane"/>
    <property type="evidence" value="ECO:0007669"/>
    <property type="project" value="UniProtKB-SubCell"/>
</dbReference>
<dbReference type="GO" id="GO:0050660">
    <property type="term" value="F:flavin adenine dinucleotide binding"/>
    <property type="evidence" value="ECO:0007669"/>
    <property type="project" value="InterPro"/>
</dbReference>
<dbReference type="GO" id="GO:0015386">
    <property type="term" value="F:potassium:proton antiporter activity"/>
    <property type="evidence" value="ECO:0007669"/>
    <property type="project" value="UniProtKB-UniRule"/>
</dbReference>
<dbReference type="GO" id="GO:0006884">
    <property type="term" value="P:cell volume homeostasis"/>
    <property type="evidence" value="ECO:0007669"/>
    <property type="project" value="InterPro"/>
</dbReference>
<dbReference type="FunFam" id="1.20.1530.20:FF:000002">
    <property type="entry name" value="K(+)/H(+) antiporter NhaP2"/>
    <property type="match status" value="1"/>
</dbReference>
<dbReference type="FunFam" id="3.30.465.10:FF:000009">
    <property type="entry name" value="K(+)/H(+) antiporter NhaP2"/>
    <property type="match status" value="1"/>
</dbReference>
<dbReference type="FunFam" id="3.30.70.1450:FF:000007">
    <property type="entry name" value="K(+)/H(+) antiporter NhaP2"/>
    <property type="match status" value="1"/>
</dbReference>
<dbReference type="Gene3D" id="1.20.1530.20">
    <property type="match status" value="1"/>
</dbReference>
<dbReference type="Gene3D" id="3.30.465.10">
    <property type="match status" value="1"/>
</dbReference>
<dbReference type="Gene3D" id="3.30.70.1450">
    <property type="entry name" value="Regulator of K+ conductance, C-terminal domain"/>
    <property type="match status" value="1"/>
</dbReference>
<dbReference type="HAMAP" id="MF_01075">
    <property type="entry name" value="NhaP2"/>
    <property type="match status" value="1"/>
</dbReference>
<dbReference type="InterPro" id="IPR006153">
    <property type="entry name" value="Cation/H_exchanger_TM"/>
</dbReference>
<dbReference type="InterPro" id="IPR036318">
    <property type="entry name" value="FAD-bd_PCMH-like_sf"/>
</dbReference>
<dbReference type="InterPro" id="IPR016169">
    <property type="entry name" value="FAD-bd_PCMH_sub2"/>
</dbReference>
<dbReference type="InterPro" id="IPR038770">
    <property type="entry name" value="Na+/solute_symporter_sf"/>
</dbReference>
<dbReference type="InterPro" id="IPR023729">
    <property type="entry name" value="NhaP2"/>
</dbReference>
<dbReference type="InterPro" id="IPR006037">
    <property type="entry name" value="RCK_C"/>
</dbReference>
<dbReference type="InterPro" id="IPR036721">
    <property type="entry name" value="RCK_C_sf"/>
</dbReference>
<dbReference type="InterPro" id="IPR005170">
    <property type="entry name" value="Transptr-assoc_dom"/>
</dbReference>
<dbReference type="NCBIfam" id="NF003714">
    <property type="entry name" value="PRK05326.1-1"/>
    <property type="match status" value="1"/>
</dbReference>
<dbReference type="NCBIfam" id="NF003715">
    <property type="entry name" value="PRK05326.1-2"/>
    <property type="match status" value="1"/>
</dbReference>
<dbReference type="NCBIfam" id="NF003716">
    <property type="entry name" value="PRK05326.1-3"/>
    <property type="match status" value="1"/>
</dbReference>
<dbReference type="PANTHER" id="PTHR32507:SF7">
    <property type="entry name" value="K(+)_H(+) ANTIPORTER NHAP2"/>
    <property type="match status" value="1"/>
</dbReference>
<dbReference type="PANTHER" id="PTHR32507">
    <property type="entry name" value="NA(+)/H(+) ANTIPORTER 1"/>
    <property type="match status" value="1"/>
</dbReference>
<dbReference type="Pfam" id="PF03471">
    <property type="entry name" value="CorC_HlyC"/>
    <property type="match status" value="1"/>
</dbReference>
<dbReference type="Pfam" id="PF00999">
    <property type="entry name" value="Na_H_Exchanger"/>
    <property type="match status" value="1"/>
</dbReference>
<dbReference type="Pfam" id="PF02080">
    <property type="entry name" value="TrkA_C"/>
    <property type="match status" value="1"/>
</dbReference>
<dbReference type="SMART" id="SM01091">
    <property type="entry name" value="CorC_HlyC"/>
    <property type="match status" value="1"/>
</dbReference>
<dbReference type="SUPFAM" id="SSF56176">
    <property type="entry name" value="FAD-binding/transporter-associated domain-like"/>
    <property type="match status" value="1"/>
</dbReference>
<dbReference type="SUPFAM" id="SSF116726">
    <property type="entry name" value="TrkA C-terminal domain-like"/>
    <property type="match status" value="1"/>
</dbReference>
<dbReference type="PROSITE" id="PS51202">
    <property type="entry name" value="RCK_C"/>
    <property type="match status" value="1"/>
</dbReference>
<protein>
    <recommendedName>
        <fullName evidence="1">K(+)/H(+) antiporter NhaP2</fullName>
    </recommendedName>
    <alternativeName>
        <fullName evidence="1">Potassium/proton antiporter NhaP2</fullName>
    </alternativeName>
</protein>
<feature type="chain" id="PRO_1000084511" description="K(+)/H(+) antiporter NhaP2">
    <location>
        <begin position="1"/>
        <end position="578"/>
    </location>
</feature>
<feature type="transmembrane region" description="Helical" evidence="1">
    <location>
        <begin position="6"/>
        <end position="26"/>
    </location>
</feature>
<feature type="transmembrane region" description="Helical" evidence="1">
    <location>
        <begin position="30"/>
        <end position="50"/>
    </location>
</feature>
<feature type="transmembrane region" description="Helical" evidence="1">
    <location>
        <begin position="58"/>
        <end position="78"/>
    </location>
</feature>
<feature type="transmembrane region" description="Helical" evidence="1">
    <location>
        <begin position="87"/>
        <end position="107"/>
    </location>
</feature>
<feature type="transmembrane region" description="Helical" evidence="1">
    <location>
        <begin position="109"/>
        <end position="129"/>
    </location>
</feature>
<feature type="transmembrane region" description="Helical" evidence="1">
    <location>
        <begin position="156"/>
        <end position="176"/>
    </location>
</feature>
<feature type="transmembrane region" description="Helical" evidence="1">
    <location>
        <begin position="183"/>
        <end position="203"/>
    </location>
</feature>
<feature type="transmembrane region" description="Helical" evidence="1">
    <location>
        <begin position="216"/>
        <end position="236"/>
    </location>
</feature>
<feature type="transmembrane region" description="Helical" evidence="1">
    <location>
        <begin position="237"/>
        <end position="257"/>
    </location>
</feature>
<feature type="transmembrane region" description="Helical" evidence="1">
    <location>
        <begin position="270"/>
        <end position="290"/>
    </location>
</feature>
<feature type="transmembrane region" description="Helical" evidence="1">
    <location>
        <begin position="293"/>
        <end position="313"/>
    </location>
</feature>
<feature type="transmembrane region" description="Helical" evidence="1">
    <location>
        <begin position="334"/>
        <end position="354"/>
    </location>
</feature>
<feature type="transmembrane region" description="Helical" evidence="1">
    <location>
        <begin position="363"/>
        <end position="383"/>
    </location>
</feature>
<feature type="domain" description="RCK C-terminal" evidence="1">
    <location>
        <begin position="403"/>
        <end position="485"/>
    </location>
</feature>
<sequence length="578" mass="62285">MDATTIISLFILGSILVTSSILLSSFSSRLGIPILVIFLAIGMLAGVDGVGGIPFDNYPFAYMVSNLALAIILLDGGMRTQASSFRVALGPALSLATLGVLITSGLTGMMAAWLFNLDLIEGLLIGAIVGSTDAAAVFSLLGGKGLNERVGSTLEIESGSNDPMAVFLTITLIAMIQHHESNISWMFIVDILQQFGLGIVIGLGGGYLLLQMINRIALPAGLYPLLALSGGILIFSLTTALEGSGILAVYLCGFLLGNRPIRNRYGILQNFDGLAWLAQIAMFLVLGLLVNPSDLLPIAIPALILSAWMIFFARPLSVFAGLLPFRGFNLRERVFISWVGLRGAVPIILAVFPMMAGLENARLFFNVAFFVVLVSLLLQGTSLSWAAKKAKVVVPPVGRPVSRVGLDIHPENPWEQFVYQLSADKWCVGAALRDLHMPKETRIAALFRDNQLLHPTGSTRLREGDVLCVIGRERDLPALGKLFSQSPPVALDQRFFGDFILEASAKYADVALIYGLEDGREYRDKQQTLGEIVQQLLGAAPVVGDQVEFAGMIWTVAEKEDNEVLKIGVRVAEEEAES</sequence>